<evidence type="ECO:0000255" key="1">
    <source>
        <dbReference type="HAMAP-Rule" id="MF_03184"/>
    </source>
</evidence>
<evidence type="ECO:0000269" key="2">
    <source>
    </source>
</evidence>
<evidence type="ECO:0000269" key="3">
    <source>
    </source>
</evidence>
<keyword id="KW-0021">Allosteric enzyme</keyword>
<keyword id="KW-0067">ATP-binding</keyword>
<keyword id="KW-0963">Cytoplasm</keyword>
<keyword id="KW-0324">Glycolysis</keyword>
<keyword id="KW-0418">Kinase</keyword>
<keyword id="KW-0460">Magnesium</keyword>
<keyword id="KW-0479">Metal-binding</keyword>
<keyword id="KW-0547">Nucleotide-binding</keyword>
<keyword id="KW-1185">Reference proteome</keyword>
<keyword id="KW-0808">Transferase</keyword>
<gene>
    <name type="primary">PFK</name>
</gene>
<name>PFKA_SCHMA</name>
<accession>Q27778</accession>
<proteinExistence type="evidence at protein level"/>
<protein>
    <recommendedName>
        <fullName evidence="1">ATP-dependent 6-phosphofructokinase</fullName>
        <shortName evidence="1">ATP-PFK</shortName>
        <shortName evidence="1">Phosphofructokinase</shortName>
        <ecNumber evidence="1">2.7.1.11</ecNumber>
    </recommendedName>
    <alternativeName>
        <fullName evidence="1">Phosphohexokinase</fullName>
    </alternativeName>
</protein>
<reference key="1">
    <citation type="journal article" date="1994" name="Mol. Biochem. Parasitol.">
        <title>Cloning and characterization of a cDNA encoding phosphofructokinase from Schistosoma mansoni.</title>
        <authorList>
            <person name="Ding J."/>
            <person name="Su J.G.J."/>
            <person name="Mansour T.E."/>
        </authorList>
    </citation>
    <scope>NUCLEOTIDE SEQUENCE [MRNA]</scope>
    <scope>CATALYTIC ACTIVITY</scope>
</reference>
<reference key="2">
    <citation type="journal article" date="1996" name="Mol. Biochem. Parasitol.">
        <title>Purification, kinetics and inhibition by antimonials of recombinant phosphofructokinase from Schistosoma mansoni.</title>
        <authorList>
            <person name="Su J.G."/>
            <person name="Mansour J.M."/>
            <person name="Mansour T.E."/>
        </authorList>
    </citation>
    <scope>FUNCTION</scope>
    <scope>CATALYTIC ACTIVITY</scope>
    <scope>BIOPHYSICOCHEMICAL PROPERTIES</scope>
    <scope>ACTIVITY REGULATION</scope>
</reference>
<dbReference type="EC" id="2.7.1.11" evidence="1"/>
<dbReference type="EMBL" id="L31531">
    <property type="protein sequence ID" value="AAA29911.1"/>
    <property type="molecule type" value="mRNA"/>
</dbReference>
<dbReference type="SMR" id="Q27778"/>
<dbReference type="FunCoup" id="Q27778">
    <property type="interactions" value="771"/>
</dbReference>
<dbReference type="STRING" id="6183.Q27778"/>
<dbReference type="eggNOG" id="KOG2440">
    <property type="taxonomic scope" value="Eukaryota"/>
</dbReference>
<dbReference type="InParanoid" id="Q27778"/>
<dbReference type="SABIO-RK" id="Q27778"/>
<dbReference type="UniPathway" id="UPA00109">
    <property type="reaction ID" value="UER00182"/>
</dbReference>
<dbReference type="Proteomes" id="UP000008854">
    <property type="component" value="Unassembled WGS sequence"/>
</dbReference>
<dbReference type="GO" id="GO:0005945">
    <property type="term" value="C:6-phosphofructokinase complex"/>
    <property type="evidence" value="ECO:0007669"/>
    <property type="project" value="TreeGrafter"/>
</dbReference>
<dbReference type="GO" id="GO:0003872">
    <property type="term" value="F:6-phosphofructokinase activity"/>
    <property type="evidence" value="ECO:0007669"/>
    <property type="project" value="UniProtKB-UniRule"/>
</dbReference>
<dbReference type="GO" id="GO:0016208">
    <property type="term" value="F:AMP binding"/>
    <property type="evidence" value="ECO:0007669"/>
    <property type="project" value="TreeGrafter"/>
</dbReference>
<dbReference type="GO" id="GO:0005524">
    <property type="term" value="F:ATP binding"/>
    <property type="evidence" value="ECO:0007669"/>
    <property type="project" value="UniProtKB-KW"/>
</dbReference>
<dbReference type="GO" id="GO:0070095">
    <property type="term" value="F:fructose-6-phosphate binding"/>
    <property type="evidence" value="ECO:0007669"/>
    <property type="project" value="TreeGrafter"/>
</dbReference>
<dbReference type="GO" id="GO:0042802">
    <property type="term" value="F:identical protein binding"/>
    <property type="evidence" value="ECO:0007669"/>
    <property type="project" value="TreeGrafter"/>
</dbReference>
<dbReference type="GO" id="GO:0046872">
    <property type="term" value="F:metal ion binding"/>
    <property type="evidence" value="ECO:0007669"/>
    <property type="project" value="UniProtKB-KW"/>
</dbReference>
<dbReference type="GO" id="GO:0048029">
    <property type="term" value="F:monosaccharide binding"/>
    <property type="evidence" value="ECO:0007669"/>
    <property type="project" value="TreeGrafter"/>
</dbReference>
<dbReference type="GO" id="GO:0061621">
    <property type="term" value="P:canonical glycolysis"/>
    <property type="evidence" value="ECO:0007669"/>
    <property type="project" value="TreeGrafter"/>
</dbReference>
<dbReference type="GO" id="GO:0030388">
    <property type="term" value="P:fructose 1,6-bisphosphate metabolic process"/>
    <property type="evidence" value="ECO:0007669"/>
    <property type="project" value="TreeGrafter"/>
</dbReference>
<dbReference type="GO" id="GO:0006002">
    <property type="term" value="P:fructose 6-phosphate metabolic process"/>
    <property type="evidence" value="ECO:0007669"/>
    <property type="project" value="InterPro"/>
</dbReference>
<dbReference type="FunFam" id="3.40.50.460:FF:000003">
    <property type="entry name" value="ATP-dependent 6-phosphofructokinase"/>
    <property type="match status" value="1"/>
</dbReference>
<dbReference type="FunFam" id="3.40.50.460:FF:000008">
    <property type="entry name" value="ATP-dependent 6-phosphofructokinase"/>
    <property type="match status" value="1"/>
</dbReference>
<dbReference type="FunFam" id="3.40.50.450:FF:000043">
    <property type="entry name" value="ATP-dependent 6-phosphofructokinase, platelet type"/>
    <property type="match status" value="1"/>
</dbReference>
<dbReference type="Gene3D" id="3.40.50.450">
    <property type="match status" value="2"/>
</dbReference>
<dbReference type="Gene3D" id="3.40.50.460">
    <property type="entry name" value="Phosphofructokinase domain"/>
    <property type="match status" value="2"/>
</dbReference>
<dbReference type="HAMAP" id="MF_03184">
    <property type="entry name" value="Phosphofructokinase_I_E"/>
    <property type="match status" value="1"/>
</dbReference>
<dbReference type="InterPro" id="IPR009161">
    <property type="entry name" value="6-Pfructokinase_euk"/>
</dbReference>
<dbReference type="InterPro" id="IPR022953">
    <property type="entry name" value="ATP_PFK"/>
</dbReference>
<dbReference type="InterPro" id="IPR015912">
    <property type="entry name" value="Phosphofructokinase_CS"/>
</dbReference>
<dbReference type="InterPro" id="IPR000023">
    <property type="entry name" value="Phosphofructokinase_dom"/>
</dbReference>
<dbReference type="InterPro" id="IPR035966">
    <property type="entry name" value="PKF_sf"/>
</dbReference>
<dbReference type="NCBIfam" id="TIGR02478">
    <property type="entry name" value="6PF1K_euk"/>
    <property type="match status" value="1"/>
</dbReference>
<dbReference type="PANTHER" id="PTHR13697:SF4">
    <property type="entry name" value="ATP-DEPENDENT 6-PHOSPHOFRUCTOKINASE"/>
    <property type="match status" value="1"/>
</dbReference>
<dbReference type="PANTHER" id="PTHR13697">
    <property type="entry name" value="PHOSPHOFRUCTOKINASE"/>
    <property type="match status" value="1"/>
</dbReference>
<dbReference type="Pfam" id="PF00365">
    <property type="entry name" value="PFK"/>
    <property type="match status" value="2"/>
</dbReference>
<dbReference type="PIRSF" id="PIRSF000533">
    <property type="entry name" value="ATP_PFK_euk"/>
    <property type="match status" value="1"/>
</dbReference>
<dbReference type="PRINTS" id="PR00476">
    <property type="entry name" value="PHFRCTKINASE"/>
</dbReference>
<dbReference type="SUPFAM" id="SSF53784">
    <property type="entry name" value="Phosphofructokinase"/>
    <property type="match status" value="2"/>
</dbReference>
<dbReference type="PROSITE" id="PS00433">
    <property type="entry name" value="PHOSPHOFRUCTOKINASE"/>
    <property type="match status" value="1"/>
</dbReference>
<comment type="function">
    <text evidence="1 3">Catalyzes the phosphorylation of D-fructose 6-phosphate to fructose 1,6-bisphosphate by ATP, the first committing step of glycolysis.</text>
</comment>
<comment type="catalytic activity">
    <reaction evidence="1 2 3">
        <text>beta-D-fructose 6-phosphate + ATP = beta-D-fructose 1,6-bisphosphate + ADP + H(+)</text>
        <dbReference type="Rhea" id="RHEA:16109"/>
        <dbReference type="ChEBI" id="CHEBI:15378"/>
        <dbReference type="ChEBI" id="CHEBI:30616"/>
        <dbReference type="ChEBI" id="CHEBI:32966"/>
        <dbReference type="ChEBI" id="CHEBI:57634"/>
        <dbReference type="ChEBI" id="CHEBI:456216"/>
        <dbReference type="EC" id="2.7.1.11"/>
    </reaction>
</comment>
<comment type="cofactor">
    <cofactor evidence="1">
        <name>Mg(2+)</name>
        <dbReference type="ChEBI" id="CHEBI:18420"/>
    </cofactor>
</comment>
<comment type="activity regulation">
    <text evidence="1 3">Allosterically activated by ADP, AMP, or fructose 2,6-bisphosphate, and allosterically inhibited by ATP or citrate.</text>
</comment>
<comment type="biophysicochemical properties">
    <kinetics>
        <KM evidence="3">3.5 mM for ATP</KM>
        <KM evidence="3">0.8 mM for fructose 6-phosphate</KM>
    </kinetics>
    <phDependence>
        <text evidence="3">Optimum pH is 7.5-9.0.</text>
    </phDependence>
</comment>
<comment type="pathway">
    <text evidence="1">Carbohydrate degradation; glycolysis; D-glyceraldehyde 3-phosphate and glycerone phosphate from D-glucose: step 3/4.</text>
</comment>
<comment type="subunit">
    <text evidence="1">Homotetramer.</text>
</comment>
<comment type="subcellular location">
    <subcellularLocation>
        <location evidence="1">Cytoplasm</location>
    </subcellularLocation>
</comment>
<comment type="similarity">
    <text evidence="1">Belongs to the phosphofructokinase type A (PFKA) family. ATP-dependent PFK group I subfamily. Eukaryotic two domain clade 'E' sub-subfamily.</text>
</comment>
<sequence length="781" mass="86060">MATWMEGKYVARGQFTGECIAVLTSGGDAQGMNAAVRAVVRMGIYCGCRVFFIREGYQGLVDGGQNIQEASWADVSGILQLGGTKIGSARCMDFRERYGRLKAAENLVKNQITNLVVIGGDGSLTGANLFRAEWSSLLEELVTSNKISAESAKQFHRLNIVGLVGSIDNDFCGTDMTIGADSALHRIIEATDAISTTAHSHQRCFILEVMGRHCGYLALVASMACEADWVFIPEMPPTDDWREKLCHKLRMNREHGQRVNIIMVAEGAIDRACKPITCEIVKNLIVSELQLDTRITVLGHVQRGGSPSAFDRILGSRMGAEAVLALMDADRDPNLPSCVISLDGNQAVRVPLVKCVDRTRQVAEAMKACDFDHAVELRGTSFMNNLATYIKLSKIEQPRQSVMSSENNLRIGIVNVGAPACGINAVIRGFTRLGITKGYKVIGIHEGFSGLVKGDASEIQWADVRGWVGMGGSMLGTRRDTPNGLGIDKVAAKFKELKLSGLLIIGGFEAYECMIELVEGREKYPELCIPMAMVPATISNNVPGTDFSLGCDTALNEITSVLDKIKQSALGTKRRVFVVETMGGYCGYLATMSALAGGADAAYIFEEPFTIDDLREDVVHLRAKIDDNVKRGLVLRADMLINTITSEFIHQLYAQEGQGIFDCRCNVLGHMQQGDRPSPFDRSLGTKFASKAIDWLDEQINANIVQILQSIHQTFMLYINWYCTSSDNLFKYSLELREHTDFVHRLPKEEWWLSLRPLMRIMAKHDSLYESESIMAGTDRK</sequence>
<feature type="chain" id="PRO_0000112033" description="ATP-dependent 6-phosphofructokinase">
    <location>
        <begin position="1"/>
        <end position="781"/>
    </location>
</feature>
<feature type="region of interest" description="N-terminal catalytic PFK domain 1">
    <location>
        <begin position="1"/>
        <end position="394"/>
    </location>
</feature>
<feature type="region of interest" description="Interdomain linker">
    <location>
        <begin position="395"/>
        <end position="409"/>
    </location>
</feature>
<feature type="region of interest" description="C-terminal regulatory PFK domain 2">
    <location>
        <begin position="410"/>
        <end position="781"/>
    </location>
</feature>
<feature type="active site" description="Proton acceptor" evidence="1">
    <location>
        <position position="168"/>
    </location>
</feature>
<feature type="binding site" evidence="1">
    <location>
        <position position="27"/>
    </location>
    <ligand>
        <name>ATP</name>
        <dbReference type="ChEBI" id="CHEBI:30616"/>
    </ligand>
</feature>
<feature type="binding site" evidence="1">
    <location>
        <begin position="90"/>
        <end position="91"/>
    </location>
    <ligand>
        <name>ATP</name>
        <dbReference type="ChEBI" id="CHEBI:30616"/>
    </ligand>
</feature>
<feature type="binding site" evidence="1">
    <location>
        <begin position="120"/>
        <end position="123"/>
    </location>
    <ligand>
        <name>ATP</name>
        <dbReference type="ChEBI" id="CHEBI:30616"/>
    </ligand>
</feature>
<feature type="binding site" evidence="1">
    <location>
        <position position="121"/>
    </location>
    <ligand>
        <name>Mg(2+)</name>
        <dbReference type="ChEBI" id="CHEBI:18420"/>
        <note>catalytic</note>
    </ligand>
</feature>
<feature type="binding site" description="in other chain" evidence="1">
    <location>
        <begin position="166"/>
        <end position="168"/>
    </location>
    <ligand>
        <name>substrate</name>
        <note>ligand shared between dimeric partners</note>
    </ligand>
</feature>
<feature type="binding site" evidence="1">
    <location>
        <position position="203"/>
    </location>
    <ligand>
        <name>substrate</name>
        <note>ligand shared between dimeric partners</note>
    </ligand>
</feature>
<feature type="binding site" description="in other chain" evidence="1">
    <location>
        <begin position="210"/>
        <end position="212"/>
    </location>
    <ligand>
        <name>substrate</name>
        <note>ligand shared between dimeric partners</note>
    </ligand>
</feature>
<feature type="binding site" description="in other chain" evidence="1">
    <location>
        <position position="266"/>
    </location>
    <ligand>
        <name>substrate</name>
        <note>ligand shared between dimeric partners</note>
    </ligand>
</feature>
<feature type="binding site" evidence="1">
    <location>
        <position position="294"/>
    </location>
    <ligand>
        <name>substrate</name>
        <note>ligand shared between dimeric partners</note>
    </ligand>
</feature>
<feature type="binding site" description="in other chain" evidence="1">
    <location>
        <begin position="300"/>
        <end position="303"/>
    </location>
    <ligand>
        <name>substrate</name>
        <note>ligand shared between dimeric partners</note>
    </ligand>
</feature>
<feature type="binding site" description="in other chain" evidence="1">
    <location>
        <position position="479"/>
    </location>
    <ligand>
        <name>beta-D-fructose 2,6-bisphosphate</name>
        <dbReference type="ChEBI" id="CHEBI:58579"/>
        <note>allosteric activator; ligand shared between dimeric partners</note>
    </ligand>
</feature>
<feature type="binding site" description="in other chain" evidence="1">
    <location>
        <begin position="537"/>
        <end position="541"/>
    </location>
    <ligand>
        <name>beta-D-fructose 2,6-bisphosphate</name>
        <dbReference type="ChEBI" id="CHEBI:58579"/>
        <note>allosteric activator; ligand shared between dimeric partners</note>
    </ligand>
</feature>
<feature type="binding site" evidence="1">
    <location>
        <position position="575"/>
    </location>
    <ligand>
        <name>beta-D-fructose 2,6-bisphosphate</name>
        <dbReference type="ChEBI" id="CHEBI:58579"/>
        <note>allosteric activator; ligand shared between dimeric partners</note>
    </ligand>
</feature>
<feature type="binding site" description="in other chain" evidence="1">
    <location>
        <begin position="582"/>
        <end position="584"/>
    </location>
    <ligand>
        <name>beta-D-fructose 2,6-bisphosphate</name>
        <dbReference type="ChEBI" id="CHEBI:58579"/>
        <note>allosteric activator; ligand shared between dimeric partners</note>
    </ligand>
</feature>
<feature type="binding site" description="in other chain" evidence="1">
    <location>
        <position position="638"/>
    </location>
    <ligand>
        <name>beta-D-fructose 2,6-bisphosphate</name>
        <dbReference type="ChEBI" id="CHEBI:58579"/>
        <note>allosteric activator; ligand shared between dimeric partners</note>
    </ligand>
</feature>
<feature type="binding site" evidence="1">
    <location>
        <position position="664"/>
    </location>
    <ligand>
        <name>beta-D-fructose 2,6-bisphosphate</name>
        <dbReference type="ChEBI" id="CHEBI:58579"/>
        <note>allosteric activator; ligand shared between dimeric partners</note>
    </ligand>
</feature>
<feature type="binding site" description="in other chain" evidence="1">
    <location>
        <begin position="670"/>
        <end position="673"/>
    </location>
    <ligand>
        <name>beta-D-fructose 2,6-bisphosphate</name>
        <dbReference type="ChEBI" id="CHEBI:58579"/>
        <note>allosteric activator; ligand shared between dimeric partners</note>
    </ligand>
</feature>
<feature type="binding site" description="in other chain" evidence="1">
    <location>
        <position position="745"/>
    </location>
    <ligand>
        <name>beta-D-fructose 2,6-bisphosphate</name>
        <dbReference type="ChEBI" id="CHEBI:58579"/>
        <note>allosteric activator; ligand shared between dimeric partners</note>
    </ligand>
</feature>
<organism>
    <name type="scientific">Schistosoma mansoni</name>
    <name type="common">Blood fluke</name>
    <dbReference type="NCBI Taxonomy" id="6183"/>
    <lineage>
        <taxon>Eukaryota</taxon>
        <taxon>Metazoa</taxon>
        <taxon>Spiralia</taxon>
        <taxon>Lophotrochozoa</taxon>
        <taxon>Platyhelminthes</taxon>
        <taxon>Trematoda</taxon>
        <taxon>Digenea</taxon>
        <taxon>Strigeidida</taxon>
        <taxon>Schistosomatoidea</taxon>
        <taxon>Schistosomatidae</taxon>
        <taxon>Schistosoma</taxon>
    </lineage>
</organism>